<feature type="chain" id="PRO_1000186263" description="Thymidine phosphorylase">
    <location>
        <begin position="1"/>
        <end position="440"/>
    </location>
</feature>
<organism>
    <name type="scientific">Proteus mirabilis (strain HI4320)</name>
    <dbReference type="NCBI Taxonomy" id="529507"/>
    <lineage>
        <taxon>Bacteria</taxon>
        <taxon>Pseudomonadati</taxon>
        <taxon>Pseudomonadota</taxon>
        <taxon>Gammaproteobacteria</taxon>
        <taxon>Enterobacterales</taxon>
        <taxon>Morganellaceae</taxon>
        <taxon>Proteus</taxon>
    </lineage>
</organism>
<proteinExistence type="inferred from homology"/>
<sequence length="440" mass="47502">MFLAQEIIRKKRDGHPLTEEEIRFFINGVRDNTVSEGQIAALAMTIYFHDMTMPERVALTLAMRDSGTVLNWKSLNLNGPIVDKHSTGGVGDVTSLMLGPMVAACGGYVPMISGRGLGHTGGTLDKLEAIPGFDIFPDDEKFRDIIRHVGVAIIGQTNSLAPADKRFYATRDITATVDSIPLITASILGKKLAEGLDALVMDVKVGSGAFMPTYQKSEELAESIVQVANGAGCQTTALLTDMNEVLASSAGNAVEVREAVQFLTGEYRNPRLFEVTMALCVEMLVSGRLADSRQQARQKLQDVLDNGKAAEVFARMVAAQNGPTDFVENYNKYLPTAVLSKPVFAEKAGFVTEMDTRALGMSVVTLGGGRRKATDAIDYSVGLSEIAALGTEINTDTPLAMIHANSEKSWQEAAAEVRKAMVIGETKRETSPMVYRQVSE</sequence>
<reference key="1">
    <citation type="journal article" date="2008" name="J. Bacteriol.">
        <title>Complete genome sequence of uropathogenic Proteus mirabilis, a master of both adherence and motility.</title>
        <authorList>
            <person name="Pearson M.M."/>
            <person name="Sebaihia M."/>
            <person name="Churcher C."/>
            <person name="Quail M.A."/>
            <person name="Seshasayee A.S."/>
            <person name="Luscombe N.M."/>
            <person name="Abdellah Z."/>
            <person name="Arrosmith C."/>
            <person name="Atkin B."/>
            <person name="Chillingworth T."/>
            <person name="Hauser H."/>
            <person name="Jagels K."/>
            <person name="Moule S."/>
            <person name="Mungall K."/>
            <person name="Norbertczak H."/>
            <person name="Rabbinowitsch E."/>
            <person name="Walker D."/>
            <person name="Whithead S."/>
            <person name="Thomson N.R."/>
            <person name="Rather P.N."/>
            <person name="Parkhill J."/>
            <person name="Mobley H.L.T."/>
        </authorList>
    </citation>
    <scope>NUCLEOTIDE SEQUENCE [LARGE SCALE GENOMIC DNA]</scope>
    <source>
        <strain>HI4320</strain>
    </source>
</reference>
<name>TYPH_PROMH</name>
<comment type="function">
    <text evidence="1">The enzymes which catalyze the reversible phosphorolysis of pyrimidine nucleosides are involved in the degradation of these compounds and in their utilization as carbon and energy sources, or in the rescue of pyrimidine bases for nucleotide synthesis.</text>
</comment>
<comment type="catalytic activity">
    <reaction evidence="1">
        <text>thymidine + phosphate = 2-deoxy-alpha-D-ribose 1-phosphate + thymine</text>
        <dbReference type="Rhea" id="RHEA:16037"/>
        <dbReference type="ChEBI" id="CHEBI:17748"/>
        <dbReference type="ChEBI" id="CHEBI:17821"/>
        <dbReference type="ChEBI" id="CHEBI:43474"/>
        <dbReference type="ChEBI" id="CHEBI:57259"/>
        <dbReference type="EC" id="2.4.2.4"/>
    </reaction>
</comment>
<comment type="pathway">
    <text evidence="1">Pyrimidine metabolism; dTMP biosynthesis via salvage pathway; dTMP from thymine: step 1/2.</text>
</comment>
<comment type="subunit">
    <text evidence="1">Homodimer.</text>
</comment>
<comment type="similarity">
    <text evidence="1">Belongs to the thymidine/pyrimidine-nucleoside phosphorylase family.</text>
</comment>
<accession>B4EWA3</accession>
<evidence type="ECO:0000255" key="1">
    <source>
        <dbReference type="HAMAP-Rule" id="MF_01628"/>
    </source>
</evidence>
<dbReference type="EC" id="2.4.2.4" evidence="1"/>
<dbReference type="EMBL" id="AM942759">
    <property type="protein sequence ID" value="CAR44773.1"/>
    <property type="molecule type" value="Genomic_DNA"/>
</dbReference>
<dbReference type="RefSeq" id="WP_004245639.1">
    <property type="nucleotide sequence ID" value="NC_010554.1"/>
</dbReference>
<dbReference type="SMR" id="B4EWA3"/>
<dbReference type="EnsemblBacteria" id="CAR44773">
    <property type="protein sequence ID" value="CAR44773"/>
    <property type="gene ID" value="PMI2415"/>
</dbReference>
<dbReference type="GeneID" id="6802750"/>
<dbReference type="KEGG" id="pmr:PMI2415"/>
<dbReference type="eggNOG" id="COG0213">
    <property type="taxonomic scope" value="Bacteria"/>
</dbReference>
<dbReference type="HOGENOM" id="CLU_025040_0_1_6"/>
<dbReference type="UniPathway" id="UPA00578">
    <property type="reaction ID" value="UER00638"/>
</dbReference>
<dbReference type="Proteomes" id="UP000008319">
    <property type="component" value="Chromosome"/>
</dbReference>
<dbReference type="GO" id="GO:0005829">
    <property type="term" value="C:cytosol"/>
    <property type="evidence" value="ECO:0007669"/>
    <property type="project" value="TreeGrafter"/>
</dbReference>
<dbReference type="GO" id="GO:0004645">
    <property type="term" value="F:1,4-alpha-oligoglucan phosphorylase activity"/>
    <property type="evidence" value="ECO:0007669"/>
    <property type="project" value="InterPro"/>
</dbReference>
<dbReference type="GO" id="GO:0009032">
    <property type="term" value="F:thymidine phosphorylase activity"/>
    <property type="evidence" value="ECO:0007669"/>
    <property type="project" value="UniProtKB-UniRule"/>
</dbReference>
<dbReference type="GO" id="GO:0006206">
    <property type="term" value="P:pyrimidine nucleobase metabolic process"/>
    <property type="evidence" value="ECO:0007669"/>
    <property type="project" value="InterPro"/>
</dbReference>
<dbReference type="GO" id="GO:0046104">
    <property type="term" value="P:thymidine metabolic process"/>
    <property type="evidence" value="ECO:0007669"/>
    <property type="project" value="UniProtKB-UniRule"/>
</dbReference>
<dbReference type="FunFam" id="3.40.1030.10:FF:000001">
    <property type="entry name" value="Thymidine phosphorylase"/>
    <property type="match status" value="1"/>
</dbReference>
<dbReference type="FunFam" id="3.90.1170.30:FF:000001">
    <property type="entry name" value="Thymidine phosphorylase"/>
    <property type="match status" value="1"/>
</dbReference>
<dbReference type="Gene3D" id="3.40.1030.10">
    <property type="entry name" value="Nucleoside phosphorylase/phosphoribosyltransferase catalytic domain"/>
    <property type="match status" value="1"/>
</dbReference>
<dbReference type="Gene3D" id="3.90.1170.30">
    <property type="entry name" value="Pyrimidine nucleoside phosphorylase-like, C-terminal domain"/>
    <property type="match status" value="1"/>
</dbReference>
<dbReference type="Gene3D" id="1.20.970.10">
    <property type="entry name" value="Transferase, Pyrimidine Nucleoside Phosphorylase, Chain C"/>
    <property type="match status" value="1"/>
</dbReference>
<dbReference type="HAMAP" id="MF_01628">
    <property type="entry name" value="Thymid_phosp"/>
    <property type="match status" value="1"/>
</dbReference>
<dbReference type="InterPro" id="IPR000312">
    <property type="entry name" value="Glycosyl_Trfase_fam3"/>
</dbReference>
<dbReference type="InterPro" id="IPR017459">
    <property type="entry name" value="Glycosyl_Trfase_fam3_N_dom"/>
</dbReference>
<dbReference type="InterPro" id="IPR036320">
    <property type="entry name" value="Glycosyl_Trfase_fam3_N_dom_sf"/>
</dbReference>
<dbReference type="InterPro" id="IPR035902">
    <property type="entry name" value="Nuc_phospho_transferase"/>
</dbReference>
<dbReference type="InterPro" id="IPR036566">
    <property type="entry name" value="PYNP-like_C_sf"/>
</dbReference>
<dbReference type="InterPro" id="IPR013102">
    <property type="entry name" value="PYNP_C"/>
</dbReference>
<dbReference type="InterPro" id="IPR018090">
    <property type="entry name" value="Pyrmidine_PPas_bac/euk"/>
</dbReference>
<dbReference type="InterPro" id="IPR017872">
    <property type="entry name" value="Pyrmidine_PPase_CS"/>
</dbReference>
<dbReference type="InterPro" id="IPR000053">
    <property type="entry name" value="Thymidine/pyrmidine_PPase"/>
</dbReference>
<dbReference type="InterPro" id="IPR013465">
    <property type="entry name" value="Thymidine_Pase"/>
</dbReference>
<dbReference type="NCBIfam" id="NF004490">
    <property type="entry name" value="PRK05820.1"/>
    <property type="match status" value="1"/>
</dbReference>
<dbReference type="NCBIfam" id="TIGR02643">
    <property type="entry name" value="T_phosphoryl"/>
    <property type="match status" value="1"/>
</dbReference>
<dbReference type="NCBIfam" id="TIGR02644">
    <property type="entry name" value="Y_phosphoryl"/>
    <property type="match status" value="1"/>
</dbReference>
<dbReference type="PANTHER" id="PTHR10515">
    <property type="entry name" value="THYMIDINE PHOSPHORYLASE"/>
    <property type="match status" value="1"/>
</dbReference>
<dbReference type="PANTHER" id="PTHR10515:SF0">
    <property type="entry name" value="THYMIDINE PHOSPHORYLASE"/>
    <property type="match status" value="1"/>
</dbReference>
<dbReference type="Pfam" id="PF02885">
    <property type="entry name" value="Glycos_trans_3N"/>
    <property type="match status" value="1"/>
</dbReference>
<dbReference type="Pfam" id="PF00591">
    <property type="entry name" value="Glycos_transf_3"/>
    <property type="match status" value="1"/>
</dbReference>
<dbReference type="Pfam" id="PF07831">
    <property type="entry name" value="PYNP_C"/>
    <property type="match status" value="1"/>
</dbReference>
<dbReference type="PIRSF" id="PIRSF000478">
    <property type="entry name" value="TP_PyNP"/>
    <property type="match status" value="1"/>
</dbReference>
<dbReference type="SMART" id="SM00941">
    <property type="entry name" value="PYNP_C"/>
    <property type="match status" value="1"/>
</dbReference>
<dbReference type="SUPFAM" id="SSF52418">
    <property type="entry name" value="Nucleoside phosphorylase/phosphoribosyltransferase catalytic domain"/>
    <property type="match status" value="1"/>
</dbReference>
<dbReference type="SUPFAM" id="SSF47648">
    <property type="entry name" value="Nucleoside phosphorylase/phosphoribosyltransferase N-terminal domain"/>
    <property type="match status" value="1"/>
</dbReference>
<dbReference type="SUPFAM" id="SSF54680">
    <property type="entry name" value="Pyrimidine nucleoside phosphorylase C-terminal domain"/>
    <property type="match status" value="1"/>
</dbReference>
<dbReference type="PROSITE" id="PS00647">
    <property type="entry name" value="THYMID_PHOSPHORYLASE"/>
    <property type="match status" value="1"/>
</dbReference>
<gene>
    <name evidence="1" type="primary">deoA</name>
    <name type="ordered locus">PMI2415</name>
</gene>
<protein>
    <recommendedName>
        <fullName evidence="1">Thymidine phosphorylase</fullName>
        <ecNumber evidence="1">2.4.2.4</ecNumber>
    </recommendedName>
    <alternativeName>
        <fullName evidence="1">TdRPase</fullName>
    </alternativeName>
</protein>
<keyword id="KW-0328">Glycosyltransferase</keyword>
<keyword id="KW-1185">Reference proteome</keyword>
<keyword id="KW-0808">Transferase</keyword>